<keyword id="KW-0997">Cell inner membrane</keyword>
<keyword id="KW-1003">Cell membrane</keyword>
<keyword id="KW-0472">Membrane</keyword>
<keyword id="KW-0812">Transmembrane</keyword>
<keyword id="KW-1133">Transmembrane helix</keyword>
<dbReference type="EMBL" id="CP000503">
    <property type="protein sequence ID" value="ABM23123.1"/>
    <property type="molecule type" value="Genomic_DNA"/>
</dbReference>
<dbReference type="RefSeq" id="WP_011787669.1">
    <property type="nucleotide sequence ID" value="NC_008750.1"/>
</dbReference>
<dbReference type="KEGG" id="shw:Sputw3181_0272"/>
<dbReference type="HOGENOM" id="CLU_032288_0_0_6"/>
<dbReference type="Proteomes" id="UP000002597">
    <property type="component" value="Chromosome"/>
</dbReference>
<dbReference type="GO" id="GO:0005886">
    <property type="term" value="C:plasma membrane"/>
    <property type="evidence" value="ECO:0007669"/>
    <property type="project" value="UniProtKB-SubCell"/>
</dbReference>
<dbReference type="HAMAP" id="MF_00672">
    <property type="entry name" value="UPF0761"/>
    <property type="match status" value="1"/>
</dbReference>
<dbReference type="InterPro" id="IPR023679">
    <property type="entry name" value="UPF0761_bac"/>
</dbReference>
<dbReference type="InterPro" id="IPR017039">
    <property type="entry name" value="Virul_fac_BrkB"/>
</dbReference>
<dbReference type="NCBIfam" id="NF002457">
    <property type="entry name" value="PRK01637.1"/>
    <property type="match status" value="1"/>
</dbReference>
<dbReference type="NCBIfam" id="TIGR00765">
    <property type="entry name" value="yihY_not_rbn"/>
    <property type="match status" value="1"/>
</dbReference>
<dbReference type="PANTHER" id="PTHR30213">
    <property type="entry name" value="INNER MEMBRANE PROTEIN YHJD"/>
    <property type="match status" value="1"/>
</dbReference>
<dbReference type="PANTHER" id="PTHR30213:SF0">
    <property type="entry name" value="UPF0761 MEMBRANE PROTEIN YIHY"/>
    <property type="match status" value="1"/>
</dbReference>
<dbReference type="Pfam" id="PF03631">
    <property type="entry name" value="Virul_fac_BrkB"/>
    <property type="match status" value="1"/>
</dbReference>
<dbReference type="PIRSF" id="PIRSF035875">
    <property type="entry name" value="RNase_BN"/>
    <property type="match status" value="1"/>
</dbReference>
<name>Y272_SHESW</name>
<organism>
    <name type="scientific">Shewanella sp. (strain W3-18-1)</name>
    <dbReference type="NCBI Taxonomy" id="351745"/>
    <lineage>
        <taxon>Bacteria</taxon>
        <taxon>Pseudomonadati</taxon>
        <taxon>Pseudomonadota</taxon>
        <taxon>Gammaproteobacteria</taxon>
        <taxon>Alteromonadales</taxon>
        <taxon>Shewanellaceae</taxon>
        <taxon>Shewanella</taxon>
    </lineage>
</organism>
<reference key="1">
    <citation type="submission" date="2006-12" db="EMBL/GenBank/DDBJ databases">
        <title>Complete sequence of Shewanella sp. W3-18-1.</title>
        <authorList>
            <consortium name="US DOE Joint Genome Institute"/>
            <person name="Copeland A."/>
            <person name="Lucas S."/>
            <person name="Lapidus A."/>
            <person name="Barry K."/>
            <person name="Detter J.C."/>
            <person name="Glavina del Rio T."/>
            <person name="Hammon N."/>
            <person name="Israni S."/>
            <person name="Dalin E."/>
            <person name="Tice H."/>
            <person name="Pitluck S."/>
            <person name="Chain P."/>
            <person name="Malfatti S."/>
            <person name="Shin M."/>
            <person name="Vergez L."/>
            <person name="Schmutz J."/>
            <person name="Larimer F."/>
            <person name="Land M."/>
            <person name="Hauser L."/>
            <person name="Kyrpides N."/>
            <person name="Lykidis A."/>
            <person name="Tiedje J."/>
            <person name="Richardson P."/>
        </authorList>
    </citation>
    <scope>NUCLEOTIDE SEQUENCE [LARGE SCALE GENOMIC DNA]</scope>
    <source>
        <strain>W3-18-1</strain>
    </source>
</reference>
<accession>A1REM8</accession>
<proteinExistence type="inferred from homology"/>
<comment type="subcellular location">
    <subcellularLocation>
        <location evidence="1">Cell inner membrane</location>
        <topology evidence="1">Multi-pass membrane protein</topology>
    </subcellularLocation>
</comment>
<comment type="similarity">
    <text evidence="1">Belongs to the UPF0761 family.</text>
</comment>
<protein>
    <recommendedName>
        <fullName evidence="1">UPF0761 membrane protein Sputw3181_0272</fullName>
    </recommendedName>
</protein>
<sequence>MTKKIEVAQIRVLFLGIWRFLQHLRLRLVEDQINIRAGHLAYVTLLSLVPLVAVTMSMLSAFPVFKGIRGQIEAFVYENFLPAAGDTVQIYINEFVGNASKGTAVGIAALVVVAIMLISAIDKSLNNIWRTKEKRSVVVAFSMYWMVITLGPVLVGASLVATSYVVSLKLFEDDTFSGVVPLFIERLPMLFSVAAFLLLYMVVPNQKVKFLHALLGALVAALLFELGKKAFALYVTQFPSYEAIYGALATIPILFVWVYLSWMIVLLGAEITAAMPEYLDYESSFDKDEASTKT</sequence>
<gene>
    <name type="ordered locus">Sputw3181_0272</name>
</gene>
<feature type="chain" id="PRO_1000044731" description="UPF0761 membrane protein Sputw3181_0272">
    <location>
        <begin position="1"/>
        <end position="294"/>
    </location>
</feature>
<feature type="transmembrane region" description="Helical" evidence="1">
    <location>
        <begin position="45"/>
        <end position="65"/>
    </location>
</feature>
<feature type="transmembrane region" description="Helical" evidence="1">
    <location>
        <begin position="102"/>
        <end position="122"/>
    </location>
</feature>
<feature type="transmembrane region" description="Helical" evidence="1">
    <location>
        <begin position="137"/>
        <end position="157"/>
    </location>
</feature>
<feature type="transmembrane region" description="Helical" evidence="1">
    <location>
        <begin position="179"/>
        <end position="199"/>
    </location>
</feature>
<feature type="transmembrane region" description="Helical" evidence="1">
    <location>
        <begin position="213"/>
        <end position="233"/>
    </location>
</feature>
<feature type="transmembrane region" description="Helical" evidence="1">
    <location>
        <begin position="247"/>
        <end position="267"/>
    </location>
</feature>
<evidence type="ECO:0000255" key="1">
    <source>
        <dbReference type="HAMAP-Rule" id="MF_00672"/>
    </source>
</evidence>